<dbReference type="EMBL" id="AP008230">
    <property type="protein sequence ID" value="BAE82058.1"/>
    <property type="molecule type" value="Genomic_DNA"/>
</dbReference>
<dbReference type="RefSeq" id="WP_005808209.1">
    <property type="nucleotide sequence ID" value="NC_007907.1"/>
</dbReference>
<dbReference type="SMR" id="Q251I4"/>
<dbReference type="STRING" id="138119.DSY0269"/>
<dbReference type="KEGG" id="dsy:DSY0269"/>
<dbReference type="eggNOG" id="COG0292">
    <property type="taxonomic scope" value="Bacteria"/>
</dbReference>
<dbReference type="HOGENOM" id="CLU_123265_0_1_9"/>
<dbReference type="Proteomes" id="UP000001946">
    <property type="component" value="Chromosome"/>
</dbReference>
<dbReference type="GO" id="GO:1990904">
    <property type="term" value="C:ribonucleoprotein complex"/>
    <property type="evidence" value="ECO:0007669"/>
    <property type="project" value="UniProtKB-KW"/>
</dbReference>
<dbReference type="GO" id="GO:0005840">
    <property type="term" value="C:ribosome"/>
    <property type="evidence" value="ECO:0007669"/>
    <property type="project" value="UniProtKB-KW"/>
</dbReference>
<dbReference type="GO" id="GO:0019843">
    <property type="term" value="F:rRNA binding"/>
    <property type="evidence" value="ECO:0007669"/>
    <property type="project" value="UniProtKB-UniRule"/>
</dbReference>
<dbReference type="GO" id="GO:0003735">
    <property type="term" value="F:structural constituent of ribosome"/>
    <property type="evidence" value="ECO:0007669"/>
    <property type="project" value="InterPro"/>
</dbReference>
<dbReference type="GO" id="GO:0000027">
    <property type="term" value="P:ribosomal large subunit assembly"/>
    <property type="evidence" value="ECO:0007669"/>
    <property type="project" value="UniProtKB-UniRule"/>
</dbReference>
<dbReference type="GO" id="GO:0006412">
    <property type="term" value="P:translation"/>
    <property type="evidence" value="ECO:0007669"/>
    <property type="project" value="InterPro"/>
</dbReference>
<dbReference type="CDD" id="cd07026">
    <property type="entry name" value="Ribosomal_L20"/>
    <property type="match status" value="1"/>
</dbReference>
<dbReference type="FunFam" id="1.10.1900.20:FF:000001">
    <property type="entry name" value="50S ribosomal protein L20"/>
    <property type="match status" value="1"/>
</dbReference>
<dbReference type="Gene3D" id="6.10.160.10">
    <property type="match status" value="1"/>
</dbReference>
<dbReference type="Gene3D" id="1.10.1900.20">
    <property type="entry name" value="Ribosomal protein L20"/>
    <property type="match status" value="1"/>
</dbReference>
<dbReference type="HAMAP" id="MF_00382">
    <property type="entry name" value="Ribosomal_bL20"/>
    <property type="match status" value="1"/>
</dbReference>
<dbReference type="InterPro" id="IPR005813">
    <property type="entry name" value="Ribosomal_bL20"/>
</dbReference>
<dbReference type="InterPro" id="IPR049946">
    <property type="entry name" value="RIBOSOMAL_L20_CS"/>
</dbReference>
<dbReference type="InterPro" id="IPR035566">
    <property type="entry name" value="Ribosomal_protein_bL20_C"/>
</dbReference>
<dbReference type="NCBIfam" id="TIGR01032">
    <property type="entry name" value="rplT_bact"/>
    <property type="match status" value="1"/>
</dbReference>
<dbReference type="PANTHER" id="PTHR10986">
    <property type="entry name" value="39S RIBOSOMAL PROTEIN L20"/>
    <property type="match status" value="1"/>
</dbReference>
<dbReference type="Pfam" id="PF00453">
    <property type="entry name" value="Ribosomal_L20"/>
    <property type="match status" value="1"/>
</dbReference>
<dbReference type="PRINTS" id="PR00062">
    <property type="entry name" value="RIBOSOMALL20"/>
</dbReference>
<dbReference type="SUPFAM" id="SSF74731">
    <property type="entry name" value="Ribosomal protein L20"/>
    <property type="match status" value="1"/>
</dbReference>
<dbReference type="PROSITE" id="PS00937">
    <property type="entry name" value="RIBOSOMAL_L20"/>
    <property type="match status" value="1"/>
</dbReference>
<reference key="1">
    <citation type="journal article" date="2006" name="J. Bacteriol.">
        <title>Complete genome sequence of the dehalorespiring bacterium Desulfitobacterium hafniense Y51 and comparison with Dehalococcoides ethenogenes 195.</title>
        <authorList>
            <person name="Nonaka H."/>
            <person name="Keresztes G."/>
            <person name="Shinoda Y."/>
            <person name="Ikenaga Y."/>
            <person name="Abe M."/>
            <person name="Naito K."/>
            <person name="Inatomi K."/>
            <person name="Furukawa K."/>
            <person name="Inui M."/>
            <person name="Yukawa H."/>
        </authorList>
    </citation>
    <scope>NUCLEOTIDE SEQUENCE [LARGE SCALE GENOMIC DNA]</scope>
    <source>
        <strain>Y51</strain>
    </source>
</reference>
<proteinExistence type="inferred from homology"/>
<accession>Q251I4</accession>
<evidence type="ECO:0000255" key="1">
    <source>
        <dbReference type="HAMAP-Rule" id="MF_00382"/>
    </source>
</evidence>
<evidence type="ECO:0000305" key="2"/>
<name>RL20_DESHY</name>
<protein>
    <recommendedName>
        <fullName evidence="1">Large ribosomal subunit protein bL20</fullName>
    </recommendedName>
    <alternativeName>
        <fullName evidence="2">50S ribosomal protein L20</fullName>
    </alternativeName>
</protein>
<comment type="function">
    <text evidence="1">Binds directly to 23S ribosomal RNA and is necessary for the in vitro assembly process of the 50S ribosomal subunit. It is not involved in the protein synthesizing functions of that subunit.</text>
</comment>
<comment type="similarity">
    <text evidence="1">Belongs to the bacterial ribosomal protein bL20 family.</text>
</comment>
<feature type="chain" id="PRO_1000048968" description="Large ribosomal subunit protein bL20">
    <location>
        <begin position="1"/>
        <end position="120"/>
    </location>
</feature>
<sequence>MARVKRGVTKHQRHKKVLKLAKGFRGAKSKLYRPANEQVMKSLAYAYAHRRDKKGDFRKLWIARINAAARLNGLSYSRMMNGLKIAGVSVNRKMLADLAINDAAAFTELVNVAKAQVSAK</sequence>
<keyword id="KW-1185">Reference proteome</keyword>
<keyword id="KW-0687">Ribonucleoprotein</keyword>
<keyword id="KW-0689">Ribosomal protein</keyword>
<keyword id="KW-0694">RNA-binding</keyword>
<keyword id="KW-0699">rRNA-binding</keyword>
<gene>
    <name evidence="1" type="primary">rplT</name>
    <name type="ordered locus">DSY0269</name>
</gene>
<organism>
    <name type="scientific">Desulfitobacterium hafniense (strain Y51)</name>
    <dbReference type="NCBI Taxonomy" id="138119"/>
    <lineage>
        <taxon>Bacteria</taxon>
        <taxon>Bacillati</taxon>
        <taxon>Bacillota</taxon>
        <taxon>Clostridia</taxon>
        <taxon>Eubacteriales</taxon>
        <taxon>Desulfitobacteriaceae</taxon>
        <taxon>Desulfitobacterium</taxon>
    </lineage>
</organism>